<feature type="chain" id="PRO_0000076212" description="CAP-Gly domain-containing linker protein 3">
    <location>
        <begin position="1"/>
        <end position="547"/>
    </location>
</feature>
<feature type="repeat" description="ANK 1">
    <location>
        <begin position="117"/>
        <end position="158"/>
    </location>
</feature>
<feature type="repeat" description="ANK 2">
    <location>
        <begin position="160"/>
        <end position="191"/>
    </location>
</feature>
<feature type="repeat" description="ANK 3">
    <location>
        <begin position="197"/>
        <end position="229"/>
    </location>
</feature>
<feature type="domain" description="CAP-Gly 1" evidence="2">
    <location>
        <begin position="314"/>
        <end position="356"/>
    </location>
</feature>
<feature type="domain" description="CAP-Gly 2" evidence="2">
    <location>
        <begin position="436"/>
        <end position="478"/>
    </location>
</feature>
<feature type="region of interest" description="Disordered" evidence="3">
    <location>
        <begin position="1"/>
        <end position="49"/>
    </location>
</feature>
<feature type="region of interest" description="Disordered" evidence="3">
    <location>
        <begin position="365"/>
        <end position="413"/>
    </location>
</feature>
<feature type="region of interest" description="GoLD">
    <location>
        <begin position="488"/>
        <end position="547"/>
    </location>
</feature>
<feature type="compositionally biased region" description="Acidic residues" evidence="3">
    <location>
        <begin position="16"/>
        <end position="27"/>
    </location>
</feature>
<feature type="compositionally biased region" description="Low complexity" evidence="3">
    <location>
        <begin position="367"/>
        <end position="377"/>
    </location>
</feature>
<feature type="compositionally biased region" description="Basic residues" evidence="3">
    <location>
        <begin position="387"/>
        <end position="399"/>
    </location>
</feature>
<feature type="compositionally biased region" description="Polar residues" evidence="3">
    <location>
        <begin position="400"/>
        <end position="410"/>
    </location>
</feature>
<feature type="modified residue" description="Phosphothreonine" evidence="1">
    <location>
        <position position="374"/>
    </location>
</feature>
<feature type="modified residue" description="Phosphoserine" evidence="1">
    <location>
        <position position="401"/>
    </location>
</feature>
<feature type="lipid moiety-binding region" description="S-palmitoyl cysteine" evidence="6">
    <location>
        <position position="534"/>
    </location>
</feature>
<feature type="lipid moiety-binding region" description="S-palmitoyl cysteine" evidence="6">
    <location>
        <position position="535"/>
    </location>
</feature>
<feature type="sequence variant" id="VAR_027962" description="In dbSNP:rs17851002." evidence="4">
    <original>D</original>
    <variation>V</variation>
    <location>
        <position position="175"/>
    </location>
</feature>
<feature type="mutagenesis site" description="Inhibits interaction with ZDHHC13 and ZDHHC17." evidence="7">
    <original>P</original>
    <variation>A</variation>
    <location>
        <position position="509"/>
    </location>
</feature>
<feature type="mutagenesis site" description="Strongly reduced plasma membrane association and decrease in the levels of Akt at the plasma membrane." evidence="6">
    <original>CC</original>
    <variation>AA</variation>
    <location>
        <begin position="534"/>
        <end position="535"/>
    </location>
</feature>
<feature type="helix" evidence="9">
    <location>
        <begin position="288"/>
        <end position="292"/>
    </location>
</feature>
<feature type="strand" evidence="9">
    <location>
        <begin position="299"/>
        <end position="302"/>
    </location>
</feature>
<feature type="turn" evidence="9">
    <location>
        <begin position="303"/>
        <end position="305"/>
    </location>
</feature>
<feature type="strand" evidence="9">
    <location>
        <begin position="306"/>
        <end position="314"/>
    </location>
</feature>
<feature type="strand" evidence="9">
    <location>
        <begin position="317"/>
        <end position="319"/>
    </location>
</feature>
<feature type="strand" evidence="9">
    <location>
        <begin position="323"/>
        <end position="331"/>
    </location>
</feature>
<feature type="strand" evidence="9">
    <location>
        <begin position="337"/>
        <end position="339"/>
    </location>
</feature>
<feature type="strand" evidence="9">
    <location>
        <begin position="348"/>
        <end position="350"/>
    </location>
</feature>
<feature type="strand" evidence="9">
    <location>
        <begin position="352"/>
        <end position="355"/>
    </location>
</feature>
<feature type="helix" evidence="9">
    <location>
        <begin position="357"/>
        <end position="359"/>
    </location>
</feature>
<feature type="strand" evidence="9">
    <location>
        <begin position="360"/>
        <end position="362"/>
    </location>
</feature>
<keyword id="KW-0002">3D-structure</keyword>
<keyword id="KW-0040">ANK repeat</keyword>
<keyword id="KW-1003">Cell membrane</keyword>
<keyword id="KW-0963">Cytoplasm</keyword>
<keyword id="KW-0333">Golgi apparatus</keyword>
<keyword id="KW-0449">Lipoprotein</keyword>
<keyword id="KW-0472">Membrane</keyword>
<keyword id="KW-0564">Palmitate</keyword>
<keyword id="KW-0597">Phosphoprotein</keyword>
<keyword id="KW-1267">Proteomics identification</keyword>
<keyword id="KW-1185">Reference proteome</keyword>
<keyword id="KW-0677">Repeat</keyword>
<dbReference type="EMBL" id="AJ427922">
    <property type="protein sequence ID" value="CAD20873.1"/>
    <property type="molecule type" value="mRNA"/>
</dbReference>
<dbReference type="EMBL" id="AK094738">
    <property type="protein sequence ID" value="BAG52921.1"/>
    <property type="molecule type" value="mRNA"/>
</dbReference>
<dbReference type="EMBL" id="AK289509">
    <property type="protein sequence ID" value="BAF82198.1"/>
    <property type="molecule type" value="mRNA"/>
</dbReference>
<dbReference type="EMBL" id="BC013116">
    <property type="protein sequence ID" value="AAH13116.2"/>
    <property type="molecule type" value="mRNA"/>
</dbReference>
<dbReference type="EMBL" id="BC014486">
    <property type="protein sequence ID" value="AAH14486.2"/>
    <property type="molecule type" value="mRNA"/>
</dbReference>
<dbReference type="EMBL" id="AL117468">
    <property type="protein sequence ID" value="CAB55943.1"/>
    <property type="molecule type" value="mRNA"/>
</dbReference>
<dbReference type="CCDS" id="CCDS12486.1"/>
<dbReference type="PIR" id="T17253">
    <property type="entry name" value="T17253"/>
</dbReference>
<dbReference type="RefSeq" id="NP_001186499.1">
    <property type="nucleotide sequence ID" value="NM_001199570.2"/>
</dbReference>
<dbReference type="RefSeq" id="NP_056341.1">
    <property type="nucleotide sequence ID" value="NM_015526.3"/>
</dbReference>
<dbReference type="PDB" id="2CP0">
    <property type="method" value="NMR"/>
    <property type="chains" value="A=285-366"/>
</dbReference>
<dbReference type="PDBsum" id="2CP0"/>
<dbReference type="SMR" id="Q96DZ5"/>
<dbReference type="BioGRID" id="117475">
    <property type="interactions" value="15"/>
</dbReference>
<dbReference type="FunCoup" id="Q96DZ5">
    <property type="interactions" value="182"/>
</dbReference>
<dbReference type="IntAct" id="Q96DZ5">
    <property type="interactions" value="10"/>
</dbReference>
<dbReference type="STRING" id="9606.ENSP00000353732"/>
<dbReference type="GlyGen" id="Q96DZ5">
    <property type="glycosylation" value="1 site"/>
</dbReference>
<dbReference type="iPTMnet" id="Q96DZ5"/>
<dbReference type="PhosphoSitePlus" id="Q96DZ5"/>
<dbReference type="SwissPalm" id="Q96DZ5"/>
<dbReference type="BioMuta" id="CLIP3"/>
<dbReference type="DMDM" id="116241302"/>
<dbReference type="jPOST" id="Q96DZ5"/>
<dbReference type="MassIVE" id="Q96DZ5"/>
<dbReference type="PaxDb" id="9606-ENSP00000353732"/>
<dbReference type="PeptideAtlas" id="Q96DZ5"/>
<dbReference type="ProteomicsDB" id="76346"/>
<dbReference type="Antibodypedia" id="48030">
    <property type="antibodies" value="133 antibodies from 24 providers"/>
</dbReference>
<dbReference type="DNASU" id="25999"/>
<dbReference type="Ensembl" id="ENST00000360535.9">
    <property type="protein sequence ID" value="ENSP00000353732.3"/>
    <property type="gene ID" value="ENSG00000105270.15"/>
</dbReference>
<dbReference type="Ensembl" id="ENST00000593074.5">
    <property type="protein sequence ID" value="ENSP00000466832.1"/>
    <property type="gene ID" value="ENSG00000105270.15"/>
</dbReference>
<dbReference type="GeneID" id="25999"/>
<dbReference type="KEGG" id="hsa:25999"/>
<dbReference type="MANE-Select" id="ENST00000360535.9">
    <property type="protein sequence ID" value="ENSP00000353732.3"/>
    <property type="RefSeq nucleotide sequence ID" value="NM_015526.3"/>
    <property type="RefSeq protein sequence ID" value="NP_056341.1"/>
</dbReference>
<dbReference type="UCSC" id="uc002ocz.3">
    <property type="organism name" value="human"/>
</dbReference>
<dbReference type="AGR" id="HGNC:24314"/>
<dbReference type="CTD" id="25999"/>
<dbReference type="DisGeNET" id="25999"/>
<dbReference type="GeneCards" id="CLIP3"/>
<dbReference type="HGNC" id="HGNC:24314">
    <property type="gene designation" value="CLIP3"/>
</dbReference>
<dbReference type="HPA" id="ENSG00000105270">
    <property type="expression patterns" value="Tissue enhanced (brain)"/>
</dbReference>
<dbReference type="MIM" id="607382">
    <property type="type" value="gene"/>
</dbReference>
<dbReference type="neXtProt" id="NX_Q96DZ5"/>
<dbReference type="OpenTargets" id="ENSG00000105270"/>
<dbReference type="PharmGKB" id="PA162382439"/>
<dbReference type="VEuPathDB" id="HostDB:ENSG00000105270"/>
<dbReference type="eggNOG" id="KOG4568">
    <property type="taxonomic scope" value="Eukaryota"/>
</dbReference>
<dbReference type="GeneTree" id="ENSGT00940000159557"/>
<dbReference type="HOGENOM" id="CLU_023687_2_1_1"/>
<dbReference type="InParanoid" id="Q96DZ5"/>
<dbReference type="OMA" id="KAESAMI"/>
<dbReference type="OrthoDB" id="2130750at2759"/>
<dbReference type="PAN-GO" id="Q96DZ5">
    <property type="GO annotations" value="5 GO annotations based on evolutionary models"/>
</dbReference>
<dbReference type="PhylomeDB" id="Q96DZ5"/>
<dbReference type="TreeFam" id="TF326096"/>
<dbReference type="PathwayCommons" id="Q96DZ5"/>
<dbReference type="Reactome" id="R-HSA-5357905">
    <property type="pathway name" value="Regulation of TNFR1 signaling"/>
</dbReference>
<dbReference type="SignaLink" id="Q96DZ5"/>
<dbReference type="BioGRID-ORCS" id="25999">
    <property type="hits" value="11 hits in 1150 CRISPR screens"/>
</dbReference>
<dbReference type="CD-CODE" id="DEE660B4">
    <property type="entry name" value="Stress granule"/>
</dbReference>
<dbReference type="CD-CODE" id="FB4E32DD">
    <property type="entry name" value="Presynaptic clusters and postsynaptic densities"/>
</dbReference>
<dbReference type="ChiTaRS" id="CLIP3">
    <property type="organism name" value="human"/>
</dbReference>
<dbReference type="EvolutionaryTrace" id="Q96DZ5"/>
<dbReference type="GenomeRNAi" id="25999"/>
<dbReference type="Pharos" id="Q96DZ5">
    <property type="development level" value="Tbio"/>
</dbReference>
<dbReference type="PRO" id="PR:Q96DZ5"/>
<dbReference type="Proteomes" id="UP000005640">
    <property type="component" value="Chromosome 19"/>
</dbReference>
<dbReference type="RNAct" id="Q96DZ5">
    <property type="molecule type" value="protein"/>
</dbReference>
<dbReference type="Bgee" id="ENSG00000105270">
    <property type="expression patterns" value="Expressed in cortical plate and 159 other cell types or tissues"/>
</dbReference>
<dbReference type="ExpressionAtlas" id="Q96DZ5">
    <property type="expression patterns" value="baseline and differential"/>
</dbReference>
<dbReference type="GO" id="GO:0005938">
    <property type="term" value="C:cell cortex"/>
    <property type="evidence" value="ECO:0000318"/>
    <property type="project" value="GO_Central"/>
</dbReference>
<dbReference type="GO" id="GO:0005829">
    <property type="term" value="C:cytosol"/>
    <property type="evidence" value="ECO:0000304"/>
    <property type="project" value="Reactome"/>
</dbReference>
<dbReference type="GO" id="GO:0031901">
    <property type="term" value="C:early endosome membrane"/>
    <property type="evidence" value="ECO:0000314"/>
    <property type="project" value="UniProtKB"/>
</dbReference>
<dbReference type="GO" id="GO:0005795">
    <property type="term" value="C:Golgi stack"/>
    <property type="evidence" value="ECO:0007669"/>
    <property type="project" value="UniProtKB-SubCell"/>
</dbReference>
<dbReference type="GO" id="GO:0045121">
    <property type="term" value="C:membrane raft"/>
    <property type="evidence" value="ECO:0000314"/>
    <property type="project" value="UniProtKB"/>
</dbReference>
<dbReference type="GO" id="GO:0035371">
    <property type="term" value="C:microtubule plus-end"/>
    <property type="evidence" value="ECO:0000318"/>
    <property type="project" value="GO_Central"/>
</dbReference>
<dbReference type="GO" id="GO:0005634">
    <property type="term" value="C:nucleus"/>
    <property type="evidence" value="ECO:0000318"/>
    <property type="project" value="GO_Central"/>
</dbReference>
<dbReference type="GO" id="GO:0005886">
    <property type="term" value="C:plasma membrane"/>
    <property type="evidence" value="ECO:0000314"/>
    <property type="project" value="UniProtKB"/>
</dbReference>
<dbReference type="GO" id="GO:0055038">
    <property type="term" value="C:recycling endosome membrane"/>
    <property type="evidence" value="ECO:0000314"/>
    <property type="project" value="UniProtKB"/>
</dbReference>
<dbReference type="GO" id="GO:0005802">
    <property type="term" value="C:trans-Golgi network"/>
    <property type="evidence" value="ECO:0000250"/>
    <property type="project" value="UniProtKB"/>
</dbReference>
<dbReference type="GO" id="GO:0032588">
    <property type="term" value="C:trans-Golgi network membrane"/>
    <property type="evidence" value="ECO:0000314"/>
    <property type="project" value="UniProtKB"/>
</dbReference>
<dbReference type="GO" id="GO:0035594">
    <property type="term" value="F:ganglioside binding"/>
    <property type="evidence" value="ECO:0000314"/>
    <property type="project" value="UniProtKB"/>
</dbReference>
<dbReference type="GO" id="GO:0008017">
    <property type="term" value="F:microtubule binding"/>
    <property type="evidence" value="ECO:0000314"/>
    <property type="project" value="UniProtKB"/>
</dbReference>
<dbReference type="GO" id="GO:0051010">
    <property type="term" value="F:microtubule plus-end binding"/>
    <property type="evidence" value="ECO:0000318"/>
    <property type="project" value="GO_Central"/>
</dbReference>
<dbReference type="GO" id="GO:0031122">
    <property type="term" value="P:cytoplasmic microtubule organization"/>
    <property type="evidence" value="ECO:0000318"/>
    <property type="project" value="GO_Central"/>
</dbReference>
<dbReference type="GO" id="GO:0045444">
    <property type="term" value="P:fat cell differentiation"/>
    <property type="evidence" value="ECO:0000250"/>
    <property type="project" value="UniProtKB"/>
</dbReference>
<dbReference type="GO" id="GO:0044091">
    <property type="term" value="P:membrane biogenesis"/>
    <property type="evidence" value="ECO:0000315"/>
    <property type="project" value="UniProtKB"/>
</dbReference>
<dbReference type="GO" id="GO:0031115">
    <property type="term" value="P:negative regulation of microtubule polymerization"/>
    <property type="evidence" value="ECO:0000315"/>
    <property type="project" value="UniProtKB"/>
</dbReference>
<dbReference type="GO" id="GO:0018230">
    <property type="term" value="P:peptidyl-L-cysteine S-palmitoylation"/>
    <property type="evidence" value="ECO:0000315"/>
    <property type="project" value="UniProtKB"/>
</dbReference>
<dbReference type="GO" id="GO:0043065">
    <property type="term" value="P:positive regulation of apoptotic process"/>
    <property type="evidence" value="ECO:0000315"/>
    <property type="project" value="UniProtKB"/>
</dbReference>
<dbReference type="GO" id="GO:0010828">
    <property type="term" value="P:positive regulation of D-glucose transmembrane transport"/>
    <property type="evidence" value="ECO:0000250"/>
    <property type="project" value="UniProtKB"/>
</dbReference>
<dbReference type="GO" id="GO:0045807">
    <property type="term" value="P:positive regulation of endocytosis"/>
    <property type="evidence" value="ECO:0000315"/>
    <property type="project" value="UniProtKB"/>
</dbReference>
<dbReference type="GO" id="GO:1903078">
    <property type="term" value="P:positive regulation of protein localization to plasma membrane"/>
    <property type="evidence" value="ECO:0000250"/>
    <property type="project" value="UniProtKB"/>
</dbReference>
<dbReference type="GO" id="GO:0001934">
    <property type="term" value="P:positive regulation of protein phosphorylation"/>
    <property type="evidence" value="ECO:0000250"/>
    <property type="project" value="UniProtKB"/>
</dbReference>
<dbReference type="GO" id="GO:0098840">
    <property type="term" value="P:protein transport along microtubule"/>
    <property type="evidence" value="ECO:0000315"/>
    <property type="project" value="GO_Central"/>
</dbReference>
<dbReference type="FunFam" id="1.25.40.20:FF:000044">
    <property type="entry name" value="CAP-Gly domain containing linker protein 3"/>
    <property type="match status" value="1"/>
</dbReference>
<dbReference type="FunFam" id="2.30.30.190:FF:000005">
    <property type="entry name" value="CAP-Gly domain containing linker protein 3"/>
    <property type="match status" value="1"/>
</dbReference>
<dbReference type="FunFam" id="2.30.30.190:FF:000011">
    <property type="entry name" value="CAP-Gly domain-containing linker protein 3"/>
    <property type="match status" value="1"/>
</dbReference>
<dbReference type="Gene3D" id="1.25.40.20">
    <property type="entry name" value="Ankyrin repeat-containing domain"/>
    <property type="match status" value="1"/>
</dbReference>
<dbReference type="Gene3D" id="2.30.30.190">
    <property type="entry name" value="CAP Gly-rich-like domain"/>
    <property type="match status" value="2"/>
</dbReference>
<dbReference type="InterPro" id="IPR002110">
    <property type="entry name" value="Ankyrin_rpt"/>
</dbReference>
<dbReference type="InterPro" id="IPR036770">
    <property type="entry name" value="Ankyrin_rpt-contain_sf"/>
</dbReference>
<dbReference type="InterPro" id="IPR036859">
    <property type="entry name" value="CAP-Gly_dom_sf"/>
</dbReference>
<dbReference type="InterPro" id="IPR000938">
    <property type="entry name" value="CAP-Gly_domain"/>
</dbReference>
<dbReference type="PANTHER" id="PTHR18916:SF77">
    <property type="entry name" value="CAP-GLY DOMAIN-CONTAINING LINKER PROTEIN 3"/>
    <property type="match status" value="1"/>
</dbReference>
<dbReference type="PANTHER" id="PTHR18916">
    <property type="entry name" value="DYNACTIN 1-RELATED MICROTUBULE-BINDING"/>
    <property type="match status" value="1"/>
</dbReference>
<dbReference type="Pfam" id="PF12796">
    <property type="entry name" value="Ank_2"/>
    <property type="match status" value="1"/>
</dbReference>
<dbReference type="Pfam" id="PF01302">
    <property type="entry name" value="CAP_GLY"/>
    <property type="match status" value="2"/>
</dbReference>
<dbReference type="SMART" id="SM00248">
    <property type="entry name" value="ANK"/>
    <property type="match status" value="3"/>
</dbReference>
<dbReference type="SMART" id="SM01052">
    <property type="entry name" value="CAP_GLY"/>
    <property type="match status" value="2"/>
</dbReference>
<dbReference type="SUPFAM" id="SSF48403">
    <property type="entry name" value="Ankyrin repeat"/>
    <property type="match status" value="1"/>
</dbReference>
<dbReference type="SUPFAM" id="SSF74924">
    <property type="entry name" value="Cap-Gly domain"/>
    <property type="match status" value="2"/>
</dbReference>
<dbReference type="PROSITE" id="PS50297">
    <property type="entry name" value="ANK_REP_REGION"/>
    <property type="match status" value="1"/>
</dbReference>
<dbReference type="PROSITE" id="PS50088">
    <property type="entry name" value="ANK_REPEAT"/>
    <property type="match status" value="1"/>
</dbReference>
<dbReference type="PROSITE" id="PS00845">
    <property type="entry name" value="CAP_GLY_1"/>
    <property type="match status" value="2"/>
</dbReference>
<dbReference type="PROSITE" id="PS50245">
    <property type="entry name" value="CAP_GLY_2"/>
    <property type="match status" value="2"/>
</dbReference>
<protein>
    <recommendedName>
        <fullName>CAP-Gly domain-containing linker protein 3</fullName>
    </recommendedName>
    <alternativeName>
        <fullName>Cytoplasmic linker protein 170-related 59 kDa protein</fullName>
        <shortName>CLIP-170-related 59 kDa protein</shortName>
        <shortName>CLIPR-59</shortName>
    </alternativeName>
</protein>
<reference key="1">
    <citation type="journal article" date="2002" name="J. Cell Biol.">
        <title>CLIPR-59, a new trans-Golgi/TGN cytoplasmic linker protein belonging to the CLIP-170 family.</title>
        <authorList>
            <person name="Perez F."/>
            <person name="Pernet-Gallay K."/>
            <person name="Nizak C."/>
            <person name="Goodson H.V."/>
            <person name="Kreis T.E."/>
            <person name="Goud B."/>
        </authorList>
    </citation>
    <scope>NUCLEOTIDE SEQUENCE [MRNA]</scope>
</reference>
<reference key="2">
    <citation type="journal article" date="2004" name="Nat. Genet.">
        <title>Complete sequencing and characterization of 21,243 full-length human cDNAs.</title>
        <authorList>
            <person name="Ota T."/>
            <person name="Suzuki Y."/>
            <person name="Nishikawa T."/>
            <person name="Otsuki T."/>
            <person name="Sugiyama T."/>
            <person name="Irie R."/>
            <person name="Wakamatsu A."/>
            <person name="Hayashi K."/>
            <person name="Sato H."/>
            <person name="Nagai K."/>
            <person name="Kimura K."/>
            <person name="Makita H."/>
            <person name="Sekine M."/>
            <person name="Obayashi M."/>
            <person name="Nishi T."/>
            <person name="Shibahara T."/>
            <person name="Tanaka T."/>
            <person name="Ishii S."/>
            <person name="Yamamoto J."/>
            <person name="Saito K."/>
            <person name="Kawai Y."/>
            <person name="Isono Y."/>
            <person name="Nakamura Y."/>
            <person name="Nagahari K."/>
            <person name="Murakami K."/>
            <person name="Yasuda T."/>
            <person name="Iwayanagi T."/>
            <person name="Wagatsuma M."/>
            <person name="Shiratori A."/>
            <person name="Sudo H."/>
            <person name="Hosoiri T."/>
            <person name="Kaku Y."/>
            <person name="Kodaira H."/>
            <person name="Kondo H."/>
            <person name="Sugawara M."/>
            <person name="Takahashi M."/>
            <person name="Kanda K."/>
            <person name="Yokoi T."/>
            <person name="Furuya T."/>
            <person name="Kikkawa E."/>
            <person name="Omura Y."/>
            <person name="Abe K."/>
            <person name="Kamihara K."/>
            <person name="Katsuta N."/>
            <person name="Sato K."/>
            <person name="Tanikawa M."/>
            <person name="Yamazaki M."/>
            <person name="Ninomiya K."/>
            <person name="Ishibashi T."/>
            <person name="Yamashita H."/>
            <person name="Murakawa K."/>
            <person name="Fujimori K."/>
            <person name="Tanai H."/>
            <person name="Kimata M."/>
            <person name="Watanabe M."/>
            <person name="Hiraoka S."/>
            <person name="Chiba Y."/>
            <person name="Ishida S."/>
            <person name="Ono Y."/>
            <person name="Takiguchi S."/>
            <person name="Watanabe S."/>
            <person name="Yosida M."/>
            <person name="Hotuta T."/>
            <person name="Kusano J."/>
            <person name="Kanehori K."/>
            <person name="Takahashi-Fujii A."/>
            <person name="Hara H."/>
            <person name="Tanase T.-O."/>
            <person name="Nomura Y."/>
            <person name="Togiya S."/>
            <person name="Komai F."/>
            <person name="Hara R."/>
            <person name="Takeuchi K."/>
            <person name="Arita M."/>
            <person name="Imose N."/>
            <person name="Musashino K."/>
            <person name="Yuuki H."/>
            <person name="Oshima A."/>
            <person name="Sasaki N."/>
            <person name="Aotsuka S."/>
            <person name="Yoshikawa Y."/>
            <person name="Matsunawa H."/>
            <person name="Ichihara T."/>
            <person name="Shiohata N."/>
            <person name="Sano S."/>
            <person name="Moriya S."/>
            <person name="Momiyama H."/>
            <person name="Satoh N."/>
            <person name="Takami S."/>
            <person name="Terashima Y."/>
            <person name="Suzuki O."/>
            <person name="Nakagawa S."/>
            <person name="Senoh A."/>
            <person name="Mizoguchi H."/>
            <person name="Goto Y."/>
            <person name="Shimizu F."/>
            <person name="Wakebe H."/>
            <person name="Hishigaki H."/>
            <person name="Watanabe T."/>
            <person name="Sugiyama A."/>
            <person name="Takemoto M."/>
            <person name="Kawakami B."/>
            <person name="Yamazaki M."/>
            <person name="Watanabe K."/>
            <person name="Kumagai A."/>
            <person name="Itakura S."/>
            <person name="Fukuzumi Y."/>
            <person name="Fujimori Y."/>
            <person name="Komiyama M."/>
            <person name="Tashiro H."/>
            <person name="Tanigami A."/>
            <person name="Fujiwara T."/>
            <person name="Ono T."/>
            <person name="Yamada K."/>
            <person name="Fujii Y."/>
            <person name="Ozaki K."/>
            <person name="Hirao M."/>
            <person name="Ohmori Y."/>
            <person name="Kawabata A."/>
            <person name="Hikiji T."/>
            <person name="Kobatake N."/>
            <person name="Inagaki H."/>
            <person name="Ikema Y."/>
            <person name="Okamoto S."/>
            <person name="Okitani R."/>
            <person name="Kawakami T."/>
            <person name="Noguchi S."/>
            <person name="Itoh T."/>
            <person name="Shigeta K."/>
            <person name="Senba T."/>
            <person name="Matsumura K."/>
            <person name="Nakajima Y."/>
            <person name="Mizuno T."/>
            <person name="Morinaga M."/>
            <person name="Sasaki M."/>
            <person name="Togashi T."/>
            <person name="Oyama M."/>
            <person name="Hata H."/>
            <person name="Watanabe M."/>
            <person name="Komatsu T."/>
            <person name="Mizushima-Sugano J."/>
            <person name="Satoh T."/>
            <person name="Shirai Y."/>
            <person name="Takahashi Y."/>
            <person name="Nakagawa K."/>
            <person name="Okumura K."/>
            <person name="Nagase T."/>
            <person name="Nomura N."/>
            <person name="Kikuchi H."/>
            <person name="Masuho Y."/>
            <person name="Yamashita R."/>
            <person name="Nakai K."/>
            <person name="Yada T."/>
            <person name="Nakamura Y."/>
            <person name="Ohara O."/>
            <person name="Isogai T."/>
            <person name="Sugano S."/>
        </authorList>
    </citation>
    <scope>NUCLEOTIDE SEQUENCE [LARGE SCALE MRNA]</scope>
    <source>
        <tissue>Brain</tissue>
        <tissue>Cerebellum</tissue>
    </source>
</reference>
<reference key="3">
    <citation type="journal article" date="2004" name="Genome Res.">
        <title>The status, quality, and expansion of the NIH full-length cDNA project: the Mammalian Gene Collection (MGC).</title>
        <authorList>
            <consortium name="The MGC Project Team"/>
        </authorList>
    </citation>
    <scope>NUCLEOTIDE SEQUENCE [LARGE SCALE MRNA]</scope>
    <scope>VARIANT VAL-175</scope>
    <source>
        <tissue>Brain</tissue>
        <tissue>Skin</tissue>
    </source>
</reference>
<reference key="4">
    <citation type="journal article" date="2007" name="BMC Genomics">
        <title>The full-ORF clone resource of the German cDNA consortium.</title>
        <authorList>
            <person name="Bechtel S."/>
            <person name="Rosenfelder H."/>
            <person name="Duda A."/>
            <person name="Schmidt C.P."/>
            <person name="Ernst U."/>
            <person name="Wellenreuther R."/>
            <person name="Mehrle A."/>
            <person name="Schuster C."/>
            <person name="Bahr A."/>
            <person name="Bloecker H."/>
            <person name="Heubner D."/>
            <person name="Hoerlein A."/>
            <person name="Michel G."/>
            <person name="Wedler H."/>
            <person name="Koehrer K."/>
            <person name="Ottenwaelder B."/>
            <person name="Poustka A."/>
            <person name="Wiemann S."/>
            <person name="Schupp I."/>
        </authorList>
    </citation>
    <scope>NUCLEOTIDE SEQUENCE [LARGE SCALE MRNA] OF 387-547</scope>
    <source>
        <tissue>Uterus</tissue>
    </source>
</reference>
<reference key="5">
    <citation type="journal article" date="2009" name="Mol. Cell. Biol.">
        <title>ClipR-59 interacts with Akt and regulates Akt cellular compartmentalization.</title>
        <authorList>
            <person name="Ding J."/>
            <person name="Du K."/>
        </authorList>
    </citation>
    <scope>FUNCTION</scope>
    <scope>INTERACTION WITH AKT1 AND AKT2</scope>
</reference>
<reference key="6">
    <citation type="journal article" date="2013" name="Mol. Cell. Biol.">
        <title>DHHC17 palmitoylates ClipR-59 and modulates ClipR-59 association with the plasma membrane.</title>
        <authorList>
            <person name="Ren W."/>
            <person name="Sun Y."/>
            <person name="Du K."/>
        </authorList>
    </citation>
    <scope>PALMITOYLATION AT CYS-534 AND CYS-535</scope>
    <scope>SUBCELLULAR LOCATION</scope>
    <scope>MUTAGENESIS OF 534-CYS--CYS-535</scope>
</reference>
<reference key="7">
    <citation type="journal article" date="2015" name="J. Biol. Chem.">
        <title>Identification of a novel sequence motif recognized by the ankyrin repeat domain of zDHHC17/13 S-acyltransferases.</title>
        <authorList>
            <person name="Lemonidis K."/>
            <person name="Sanchez-Perez M.C."/>
            <person name="Chamberlain L.H."/>
        </authorList>
    </citation>
    <scope>INTERACTION WITH ZDHHC17 AND ZDHHC13</scope>
    <scope>MUTAGENESIS OF PRO-509</scope>
</reference>
<reference key="8">
    <citation type="journal article" date="2017" name="J. Biol. Chem.">
        <title>Peptide array based screening reveals a large number of proteins interacting with the ankyrin repeat domain of the zDHHC17 S-acyltransferase.</title>
        <authorList>
            <person name="Lemonidis K."/>
            <person name="MacLeod R."/>
            <person name="Baillie G.S."/>
            <person name="Chamberlain L.H."/>
        </authorList>
    </citation>
    <scope>INTERACTION WITH ZDHHC17</scope>
</reference>
<reference key="9">
    <citation type="submission" date="2005-11" db="PDB data bank">
        <title>Solution structure of the 1st CAP-GLY domain in human clip-170-related protein CLIPR59.</title>
        <authorList>
            <consortium name="RIKEN structural genomics initiative (RSGI)"/>
        </authorList>
    </citation>
    <scope>STRUCTURE BY NMR OF 285-366</scope>
</reference>
<gene>
    <name type="primary">CLIP3</name>
    <name type="synonym">CLIPR59</name>
</gene>
<comment type="function">
    <text evidence="5">Functions as a cytoplasmic linker protein. Involved in TGN-endosome dynamics. May modulate the cellular compartmentalization of AKT kinase family and promote its cell membrane localization, thereby playing a role in glucose transport in adipocytes.</text>
</comment>
<comment type="subunit">
    <text evidence="5 7 8">Homodimer. Interacts with AKT1 and AKT2; when AKT1 and AKT2 are phosphorylated and activated, affinity is higher for AKT2 (PubMed:19139280). Interacts with ZDHHC13 (via ANK repeats) (PubMed:26198635). Interacts with ZDHHC17 (via ANK repeats) (PubMed:26198635, PubMed:28882895).</text>
</comment>
<comment type="interaction">
    <interactant intactId="EBI-12823145">
        <id>Q96DZ5</id>
    </interactant>
    <interactant intactId="EBI-11123098">
        <id>Q9Y592-2</id>
        <label>CEP83</label>
    </interactant>
    <organismsDiffer>false</organismsDiffer>
    <experiments>3</experiments>
</comment>
<comment type="interaction">
    <interactant intactId="EBI-12823145">
        <id>Q96DZ5</id>
    </interactant>
    <interactant intactId="EBI-618309">
        <id>Q08379</id>
        <label>GOLGA2</label>
    </interactant>
    <organismsDiffer>false</organismsDiffer>
    <experiments>3</experiments>
</comment>
<comment type="interaction">
    <interactant intactId="EBI-12823145">
        <id>Q96DZ5</id>
    </interactant>
    <interactant intactId="EBI-747754">
        <id>P28799</id>
        <label>GRN</label>
    </interactant>
    <organismsDiffer>false</organismsDiffer>
    <experiments>3</experiments>
</comment>
<comment type="interaction">
    <interactant intactId="EBI-12823145">
        <id>Q96DZ5</id>
    </interactant>
    <interactant intactId="EBI-352682">
        <id>P04792</id>
        <label>HSPB1</label>
    </interactant>
    <organismsDiffer>false</organismsDiffer>
    <experiments>3</experiments>
</comment>
<comment type="interaction">
    <interactant intactId="EBI-12823145">
        <id>Q96DZ5</id>
    </interactant>
    <interactant intactId="EBI-10975473">
        <id>O60333-2</id>
        <label>KIF1B</label>
    </interactant>
    <organismsDiffer>false</organismsDiffer>
    <experiments>3</experiments>
</comment>
<comment type="interaction">
    <interactant intactId="EBI-12823145">
        <id>Q96DZ5</id>
    </interactant>
    <interactant intactId="EBI-396669">
        <id>Q9Y3C5</id>
        <label>RNF11</label>
    </interactant>
    <organismsDiffer>false</organismsDiffer>
    <experiments>3</experiments>
</comment>
<comment type="interaction">
    <interactant intactId="EBI-12823145">
        <id>Q96DZ5</id>
    </interactant>
    <interactant intactId="EBI-11741437">
        <id>Q08117-2</id>
        <label>TLE5</label>
    </interactant>
    <organismsDiffer>false</organismsDiffer>
    <experiments>3</experiments>
</comment>
<comment type="interaction">
    <interactant intactId="EBI-12823145">
        <id>Q96DZ5</id>
    </interactant>
    <interactant intactId="EBI-720609">
        <id>O76024</id>
        <label>WFS1</label>
    </interactant>
    <organismsDiffer>false</organismsDiffer>
    <experiments>3</experiments>
</comment>
<comment type="subcellular location">
    <subcellularLocation>
        <location evidence="6">Cell membrane</location>
        <topology evidence="6">Lipid-anchor</topology>
    </subcellularLocation>
    <subcellularLocation>
        <location evidence="6">Cytoplasm</location>
    </subcellularLocation>
    <subcellularLocation>
        <location evidence="6">Golgi apparatus</location>
        <location evidence="6">Golgi stack</location>
    </subcellularLocation>
    <text>Localized to Golgi stacks as well as on tubulovesicular elements juxtaposed to Golgi cisternae.</text>
</comment>
<comment type="domain">
    <text>Microtubule association is inhibited by the ANK repeats and the Golgi localization region (GoLD).</text>
</comment>
<comment type="PTM">
    <text evidence="6">Palmitoylation by ZDHHC17 regulates association with the plasma membrane.</text>
</comment>
<comment type="miscellaneous">
    <text>The N-terminal half is dispensable for proper Golgi targeting, whereas the GoLD region is required.</text>
</comment>
<name>CLIP3_HUMAN</name>
<evidence type="ECO:0000250" key="1">
    <source>
        <dbReference type="UniProtKB" id="B9EHT4"/>
    </source>
</evidence>
<evidence type="ECO:0000255" key="2">
    <source>
        <dbReference type="PROSITE-ProRule" id="PRU00045"/>
    </source>
</evidence>
<evidence type="ECO:0000256" key="3">
    <source>
        <dbReference type="SAM" id="MobiDB-lite"/>
    </source>
</evidence>
<evidence type="ECO:0000269" key="4">
    <source>
    </source>
</evidence>
<evidence type="ECO:0000269" key="5">
    <source>
    </source>
</evidence>
<evidence type="ECO:0000269" key="6">
    <source>
    </source>
</evidence>
<evidence type="ECO:0000269" key="7">
    <source>
    </source>
</evidence>
<evidence type="ECO:0000269" key="8">
    <source>
    </source>
</evidence>
<evidence type="ECO:0007829" key="9">
    <source>
        <dbReference type="PDB" id="2CP0"/>
    </source>
</evidence>
<accession>Q96DZ5</accession>
<accession>A8K0E4</accession>
<accession>Q8WWL1</accession>
<accession>Q96C99</accession>
<accession>Q9UFT7</accession>
<organism>
    <name type="scientific">Homo sapiens</name>
    <name type="common">Human</name>
    <dbReference type="NCBI Taxonomy" id="9606"/>
    <lineage>
        <taxon>Eukaryota</taxon>
        <taxon>Metazoa</taxon>
        <taxon>Chordata</taxon>
        <taxon>Craniata</taxon>
        <taxon>Vertebrata</taxon>
        <taxon>Euteleostomi</taxon>
        <taxon>Mammalia</taxon>
        <taxon>Eutheria</taxon>
        <taxon>Euarchontoglires</taxon>
        <taxon>Primates</taxon>
        <taxon>Haplorrhini</taxon>
        <taxon>Catarrhini</taxon>
        <taxon>Hominidae</taxon>
        <taxon>Homo</taxon>
    </lineage>
</organism>
<proteinExistence type="evidence at protein level"/>
<sequence length="547" mass="59560">MTKTDPAPMAPPPRGEEEEEEEEDEPVPEAPSPTQERRQKPVVHPSAPAPLPKDYAFTFFDPNDPACQEILFDPQTTIPELFAIVRQWVPQVQHKIDVIGNEILRRGCHVNDRDGLTDMTLLHYACKAGAHGVGDPAAAVRLSQQLLALGADVTLRSRWTNMNALHYAAYFDVPDLVRVLLKGARPRVVNSTCSDFNHGSALHIAASSLCLGAAKCLLEHGANPALRNRKGQVPAEVVPDPMDMSLDKAEAALVAKELRTLLEEAVPLSCALPKVTLPNYDNVPGNLMLSALGLRLGDRVLLDGQKTGTLRFCGTTEFASGQWVGVELDEPEGKNDGSVGGVRYFICPPKQGLFASVSKISKAVDAPPSSVTSTPRTPRMDFSRVTGKGRREHKGKKKTPSSPSLGSLQQRDGAKAEVGDQVLVAGQKQGIVRFYGKTDFAPGYWYGIELDQPTGKHDGSVFGVRYFTCPPRHGVFAPASRIQRIGGSTDSPGDSVGAKKVHQVTMTQPKRTFTTVRTPKDIASENSISRLLFCCWFPWMLRAEMQS</sequence>